<evidence type="ECO:0000255" key="1">
    <source>
        <dbReference type="HAMAP-Rule" id="MF_00518"/>
    </source>
</evidence>
<accession>Q88D02</accession>
<comment type="function">
    <text evidence="1">An aminoacyl-tRNA editing enzyme that deacylates mischarged D-aminoacyl-tRNAs. Also deacylates mischarged glycyl-tRNA(Ala), protecting cells against glycine mischarging by AlaRS. Acts via tRNA-based rather than protein-based catalysis; rejects L-amino acids rather than detecting D-amino acids in the active site. By recycling D-aminoacyl-tRNA to D-amino acids and free tRNA molecules, this enzyme counteracts the toxicity associated with the formation of D-aminoacyl-tRNA entities in vivo and helps enforce protein L-homochirality.</text>
</comment>
<comment type="catalytic activity">
    <reaction evidence="1">
        <text>glycyl-tRNA(Ala) + H2O = tRNA(Ala) + glycine + H(+)</text>
        <dbReference type="Rhea" id="RHEA:53744"/>
        <dbReference type="Rhea" id="RHEA-COMP:9657"/>
        <dbReference type="Rhea" id="RHEA-COMP:13640"/>
        <dbReference type="ChEBI" id="CHEBI:15377"/>
        <dbReference type="ChEBI" id="CHEBI:15378"/>
        <dbReference type="ChEBI" id="CHEBI:57305"/>
        <dbReference type="ChEBI" id="CHEBI:78442"/>
        <dbReference type="ChEBI" id="CHEBI:78522"/>
        <dbReference type="EC" id="3.1.1.96"/>
    </reaction>
</comment>
<comment type="catalytic activity">
    <reaction evidence="1">
        <text>a D-aminoacyl-tRNA + H2O = a tRNA + a D-alpha-amino acid + H(+)</text>
        <dbReference type="Rhea" id="RHEA:13953"/>
        <dbReference type="Rhea" id="RHEA-COMP:10123"/>
        <dbReference type="Rhea" id="RHEA-COMP:10124"/>
        <dbReference type="ChEBI" id="CHEBI:15377"/>
        <dbReference type="ChEBI" id="CHEBI:15378"/>
        <dbReference type="ChEBI" id="CHEBI:59871"/>
        <dbReference type="ChEBI" id="CHEBI:78442"/>
        <dbReference type="ChEBI" id="CHEBI:79333"/>
        <dbReference type="EC" id="3.1.1.96"/>
    </reaction>
</comment>
<comment type="subunit">
    <text evidence="1">Homodimer.</text>
</comment>
<comment type="subcellular location">
    <subcellularLocation>
        <location evidence="1">Cytoplasm</location>
    </subcellularLocation>
</comment>
<comment type="domain">
    <text evidence="1">A Gly-cisPro motif from one monomer fits into the active site of the other monomer to allow specific chiral rejection of L-amino acids.</text>
</comment>
<comment type="similarity">
    <text evidence="1">Belongs to the DTD family.</text>
</comment>
<dbReference type="EC" id="3.1.1.96" evidence="1"/>
<dbReference type="EMBL" id="AE015451">
    <property type="protein sequence ID" value="AAN70592.1"/>
    <property type="molecule type" value="Genomic_DNA"/>
</dbReference>
<dbReference type="RefSeq" id="NP_747128.1">
    <property type="nucleotide sequence ID" value="NC_002947.4"/>
</dbReference>
<dbReference type="RefSeq" id="WP_003249262.1">
    <property type="nucleotide sequence ID" value="NZ_CP169744.1"/>
</dbReference>
<dbReference type="SMR" id="Q88D02"/>
<dbReference type="STRING" id="160488.PP_5027"/>
<dbReference type="PaxDb" id="160488-PP_5027"/>
<dbReference type="GeneID" id="83682761"/>
<dbReference type="KEGG" id="ppu:PP_5027"/>
<dbReference type="PATRIC" id="fig|160488.4.peg.5368"/>
<dbReference type="eggNOG" id="COG1490">
    <property type="taxonomic scope" value="Bacteria"/>
</dbReference>
<dbReference type="HOGENOM" id="CLU_076901_1_1_6"/>
<dbReference type="OrthoDB" id="9801395at2"/>
<dbReference type="PhylomeDB" id="Q88D02"/>
<dbReference type="BioCyc" id="PPUT160488:G1G01-5372-MONOMER"/>
<dbReference type="Proteomes" id="UP000000556">
    <property type="component" value="Chromosome"/>
</dbReference>
<dbReference type="GO" id="GO:0005737">
    <property type="term" value="C:cytoplasm"/>
    <property type="evidence" value="ECO:0007669"/>
    <property type="project" value="UniProtKB-SubCell"/>
</dbReference>
<dbReference type="GO" id="GO:0051500">
    <property type="term" value="F:D-tyrosyl-tRNA(Tyr) deacylase activity"/>
    <property type="evidence" value="ECO:0007669"/>
    <property type="project" value="TreeGrafter"/>
</dbReference>
<dbReference type="GO" id="GO:0106026">
    <property type="term" value="F:Gly-tRNA(Ala) deacylase activity"/>
    <property type="evidence" value="ECO:0007669"/>
    <property type="project" value="UniProtKB-UniRule"/>
</dbReference>
<dbReference type="GO" id="GO:0043908">
    <property type="term" value="F:Ser(Gly)-tRNA(Ala) hydrolase activity"/>
    <property type="evidence" value="ECO:0007669"/>
    <property type="project" value="UniProtKB-UniRule"/>
</dbReference>
<dbReference type="GO" id="GO:0000049">
    <property type="term" value="F:tRNA binding"/>
    <property type="evidence" value="ECO:0007669"/>
    <property type="project" value="UniProtKB-UniRule"/>
</dbReference>
<dbReference type="GO" id="GO:0019478">
    <property type="term" value="P:D-amino acid catabolic process"/>
    <property type="evidence" value="ECO:0007669"/>
    <property type="project" value="UniProtKB-UniRule"/>
</dbReference>
<dbReference type="CDD" id="cd00563">
    <property type="entry name" value="Dtyr_deacylase"/>
    <property type="match status" value="1"/>
</dbReference>
<dbReference type="FunFam" id="3.50.80.10:FF:000001">
    <property type="entry name" value="D-aminoacyl-tRNA deacylase"/>
    <property type="match status" value="1"/>
</dbReference>
<dbReference type="Gene3D" id="3.50.80.10">
    <property type="entry name" value="D-tyrosyl-tRNA(Tyr) deacylase"/>
    <property type="match status" value="1"/>
</dbReference>
<dbReference type="HAMAP" id="MF_00518">
    <property type="entry name" value="Deacylase_Dtd"/>
    <property type="match status" value="1"/>
</dbReference>
<dbReference type="InterPro" id="IPR003732">
    <property type="entry name" value="Daa-tRNA_deacyls_DTD"/>
</dbReference>
<dbReference type="InterPro" id="IPR023509">
    <property type="entry name" value="DTD-like_sf"/>
</dbReference>
<dbReference type="NCBIfam" id="TIGR00256">
    <property type="entry name" value="D-aminoacyl-tRNA deacylase"/>
    <property type="match status" value="1"/>
</dbReference>
<dbReference type="PANTHER" id="PTHR10472:SF5">
    <property type="entry name" value="D-AMINOACYL-TRNA DEACYLASE 1"/>
    <property type="match status" value="1"/>
</dbReference>
<dbReference type="PANTHER" id="PTHR10472">
    <property type="entry name" value="D-TYROSYL-TRNA TYR DEACYLASE"/>
    <property type="match status" value="1"/>
</dbReference>
<dbReference type="Pfam" id="PF02580">
    <property type="entry name" value="Tyr_Deacylase"/>
    <property type="match status" value="1"/>
</dbReference>
<dbReference type="SUPFAM" id="SSF69500">
    <property type="entry name" value="DTD-like"/>
    <property type="match status" value="1"/>
</dbReference>
<protein>
    <recommendedName>
        <fullName evidence="1">D-aminoacyl-tRNA deacylase</fullName>
        <shortName evidence="1">DTD</shortName>
        <ecNumber evidence="1">3.1.1.96</ecNumber>
    </recommendedName>
    <alternativeName>
        <fullName evidence="1">Gly-tRNA(Ala) deacylase</fullName>
    </alternativeName>
</protein>
<sequence length="145" mass="15685">MRGLLQRVRGARVEVAGEVVGAIDQGLLVLVAVEPEDSREQADKLLHKLLNYRVFSDEQGKMNLSLKDVGGGLLLVSQFTLAADTRNGMRPSFSTAAPPALGAELFDYLLQQAKAQYADVASGRFGADMQVHLVNDGPVTFMLQI</sequence>
<gene>
    <name evidence="1" type="primary">dtd</name>
    <name type="ordered locus">PP_5027</name>
</gene>
<keyword id="KW-0963">Cytoplasm</keyword>
<keyword id="KW-0378">Hydrolase</keyword>
<keyword id="KW-1185">Reference proteome</keyword>
<keyword id="KW-0694">RNA-binding</keyword>
<keyword id="KW-0820">tRNA-binding</keyword>
<feature type="chain" id="PRO_0000164575" description="D-aminoacyl-tRNA deacylase">
    <location>
        <begin position="1"/>
        <end position="145"/>
    </location>
</feature>
<feature type="short sequence motif" description="Gly-cisPro motif, important for rejection of L-amino acids" evidence="1">
    <location>
        <begin position="137"/>
        <end position="138"/>
    </location>
</feature>
<name>DTD_PSEPK</name>
<proteinExistence type="inferred from homology"/>
<reference key="1">
    <citation type="journal article" date="2002" name="Environ. Microbiol.">
        <title>Complete genome sequence and comparative analysis of the metabolically versatile Pseudomonas putida KT2440.</title>
        <authorList>
            <person name="Nelson K.E."/>
            <person name="Weinel C."/>
            <person name="Paulsen I.T."/>
            <person name="Dodson R.J."/>
            <person name="Hilbert H."/>
            <person name="Martins dos Santos V.A.P."/>
            <person name="Fouts D.E."/>
            <person name="Gill S.R."/>
            <person name="Pop M."/>
            <person name="Holmes M."/>
            <person name="Brinkac L.M."/>
            <person name="Beanan M.J."/>
            <person name="DeBoy R.T."/>
            <person name="Daugherty S.C."/>
            <person name="Kolonay J.F."/>
            <person name="Madupu R."/>
            <person name="Nelson W.C."/>
            <person name="White O."/>
            <person name="Peterson J.D."/>
            <person name="Khouri H.M."/>
            <person name="Hance I."/>
            <person name="Chris Lee P."/>
            <person name="Holtzapple E.K."/>
            <person name="Scanlan D."/>
            <person name="Tran K."/>
            <person name="Moazzez A."/>
            <person name="Utterback T.R."/>
            <person name="Rizzo M."/>
            <person name="Lee K."/>
            <person name="Kosack D."/>
            <person name="Moestl D."/>
            <person name="Wedler H."/>
            <person name="Lauber J."/>
            <person name="Stjepandic D."/>
            <person name="Hoheisel J."/>
            <person name="Straetz M."/>
            <person name="Heim S."/>
            <person name="Kiewitz C."/>
            <person name="Eisen J.A."/>
            <person name="Timmis K.N."/>
            <person name="Duesterhoeft A."/>
            <person name="Tuemmler B."/>
            <person name="Fraser C.M."/>
        </authorList>
    </citation>
    <scope>NUCLEOTIDE SEQUENCE [LARGE SCALE GENOMIC DNA]</scope>
    <source>
        <strain>ATCC 47054 / DSM 6125 / CFBP 8728 / NCIMB 11950 / KT2440</strain>
    </source>
</reference>
<organism>
    <name type="scientific">Pseudomonas putida (strain ATCC 47054 / DSM 6125 / CFBP 8728 / NCIMB 11950 / KT2440)</name>
    <dbReference type="NCBI Taxonomy" id="160488"/>
    <lineage>
        <taxon>Bacteria</taxon>
        <taxon>Pseudomonadati</taxon>
        <taxon>Pseudomonadota</taxon>
        <taxon>Gammaproteobacteria</taxon>
        <taxon>Pseudomonadales</taxon>
        <taxon>Pseudomonadaceae</taxon>
        <taxon>Pseudomonas</taxon>
    </lineage>
</organism>